<protein>
    <recommendedName>
        <fullName>Protein ORF28</fullName>
    </recommendedName>
</protein>
<feature type="chain" id="PRO_0000423773" description="Protein ORF28">
    <location>
        <begin position="1"/>
        <end position="102"/>
    </location>
</feature>
<feature type="transmembrane region" description="Helical" evidence="1">
    <location>
        <begin position="28"/>
        <end position="48"/>
    </location>
</feature>
<accession>F5HI25</accession>
<organismHost>
    <name type="scientific">Homo sapiens</name>
    <name type="common">Human</name>
    <dbReference type="NCBI Taxonomy" id="9606"/>
</organismHost>
<name>ORF28_HHV8P</name>
<reference key="1">
    <citation type="journal article" date="1999" name="J. Virol.">
        <title>Identification of a spliced gene from Kaposi's sarcoma-associated herpesvirus encoding a protein with similarities to latent membrane proteins 1 and 2A of Epstein-Barr virus.</title>
        <authorList>
            <person name="Glenn M."/>
            <person name="Rainbow L."/>
            <person name="Aurade F."/>
            <person name="Davison A."/>
            <person name="Schulz T.F."/>
        </authorList>
    </citation>
    <scope>NUCLEOTIDE SEQUENCE [LARGE SCALE GENOMIC DNA]</scope>
</reference>
<reference key="2">
    <citation type="journal article" date="2006" name="J. Gen. Virol.">
        <title>Kaposi's sarcoma-associated herpesvirus immune modulation: an overview.</title>
        <authorList>
            <person name="Rezaee S.A.R."/>
            <person name="Cunningham C."/>
            <person name="Davison A.J."/>
            <person name="Blackbourn D.J."/>
        </authorList>
    </citation>
    <scope>NUCLEOTIDE SEQUENCE [LARGE SCALE GENOMIC DNA]</scope>
</reference>
<dbReference type="EMBL" id="AF148805">
    <property type="protein sequence ID" value="ABD28879.1"/>
    <property type="molecule type" value="Genomic_DNA"/>
</dbReference>
<dbReference type="RefSeq" id="YP_001129381.1">
    <property type="nucleotide sequence ID" value="NC_009333.1"/>
</dbReference>
<dbReference type="SMR" id="F5HI25"/>
<dbReference type="BioGRID" id="1777010">
    <property type="interactions" value="6"/>
</dbReference>
<dbReference type="DNASU" id="4961507"/>
<dbReference type="GeneID" id="4961507"/>
<dbReference type="KEGG" id="vg:4961507"/>
<dbReference type="Proteomes" id="UP000000942">
    <property type="component" value="Segment"/>
</dbReference>
<dbReference type="GO" id="GO:0033644">
    <property type="term" value="C:host cell membrane"/>
    <property type="evidence" value="ECO:0007669"/>
    <property type="project" value="UniProtKB-SubCell"/>
</dbReference>
<dbReference type="GO" id="GO:0016020">
    <property type="term" value="C:membrane"/>
    <property type="evidence" value="ECO:0007669"/>
    <property type="project" value="UniProtKB-KW"/>
</dbReference>
<dbReference type="GO" id="GO:0019031">
    <property type="term" value="C:viral envelope"/>
    <property type="evidence" value="ECO:0000314"/>
    <property type="project" value="CACAO"/>
</dbReference>
<organism>
    <name type="scientific">Human herpesvirus 8 type P (isolate GK18)</name>
    <name type="common">HHV-8</name>
    <name type="synonym">Kaposi's sarcoma-associated herpesvirus</name>
    <dbReference type="NCBI Taxonomy" id="868565"/>
    <lineage>
        <taxon>Viruses</taxon>
        <taxon>Duplodnaviria</taxon>
        <taxon>Heunggongvirae</taxon>
        <taxon>Peploviricota</taxon>
        <taxon>Herviviricetes</taxon>
        <taxon>Herpesvirales</taxon>
        <taxon>Orthoherpesviridae</taxon>
        <taxon>Gammaherpesvirinae</taxon>
        <taxon>Rhadinovirus</taxon>
        <taxon>Rhadinovirus humangamma8</taxon>
        <taxon>Human herpesvirus 8</taxon>
    </lineage>
</organism>
<comment type="subcellular location">
    <subcellularLocation>
        <location evidence="2">Host membrane</location>
        <topology evidence="2">Single-pass membrane protein</topology>
    </subcellularLocation>
</comment>
<sequence length="102" mass="10861">MSMTSPSPVTGGMVDGSVLVRMATKPPVIGLITVLFLLVIGACVYCCIRVFLAARLWRATPLGRATVAYQVLRTLGPQAGSHAPPTVGIATQEPYRTIYMPD</sequence>
<gene>
    <name type="primary">ORF28</name>
</gene>
<proteinExistence type="predicted"/>
<keyword id="KW-1043">Host membrane</keyword>
<keyword id="KW-0472">Membrane</keyword>
<keyword id="KW-1185">Reference proteome</keyword>
<keyword id="KW-0812">Transmembrane</keyword>
<keyword id="KW-1133">Transmembrane helix</keyword>
<evidence type="ECO:0000255" key="1"/>
<evidence type="ECO:0000305" key="2"/>